<accession>P0DN04</accession>
<protein>
    <recommendedName>
        <fullName evidence="5">U-actitoxin-Avd10a</fullName>
        <shortName evidence="5">U-AITX-Avd10a</shortName>
    </recommendedName>
    <alternativeName>
        <fullName evidence="4">Potassium channel toxin avtx-10</fullName>
    </alternativeName>
</protein>
<reference key="1">
    <citation type="journal article" date="2009" name="BMC Genomics">
        <title>Comprehensive EST analysis of the symbiotic sea anemone, Anemonia viridis.</title>
        <authorList>
            <person name="Sabourault C."/>
            <person name="Ganot P."/>
            <person name="Deleury E."/>
            <person name="Allemand D."/>
            <person name="Furla P."/>
        </authorList>
    </citation>
    <scope>NUCLEOTIDE SEQUENCE [MRNA]</scope>
</reference>
<reference key="2">
    <citation type="journal article" date="2011" name="BMC Genomics">
        <title>The mining of toxin-like polypeptides from EST database by single residue distribution analysis.</title>
        <authorList>
            <person name="Kozlov S."/>
            <person name="Grishin E."/>
        </authorList>
    </citation>
    <scope>NOMENCLATURE</scope>
</reference>
<reference key="3">
    <citation type="journal article" date="2012" name="Toxicon">
        <title>Development of a rational nomenclature for naming peptide and protein toxins from sea anemones.</title>
        <authorList>
            <person name="Oliveira J.S."/>
            <person name="Fuentes-Silva D."/>
            <person name="King G.F."/>
        </authorList>
    </citation>
    <scope>NOMENCLATURE</scope>
</reference>
<name>K1BAA_ANEVI</name>
<dbReference type="EMBL" id="FK743341">
    <property type="status" value="NOT_ANNOTATED_CDS"/>
    <property type="molecule type" value="mRNA"/>
</dbReference>
<dbReference type="SMR" id="P0DN04"/>
<dbReference type="GO" id="GO:0005576">
    <property type="term" value="C:extracellular region"/>
    <property type="evidence" value="ECO:0007669"/>
    <property type="project" value="UniProtKB-SubCell"/>
</dbReference>
<dbReference type="GO" id="GO:0042151">
    <property type="term" value="C:nematocyst"/>
    <property type="evidence" value="ECO:0007669"/>
    <property type="project" value="UniProtKB-SubCell"/>
</dbReference>
<dbReference type="GO" id="GO:0015459">
    <property type="term" value="F:potassium channel regulator activity"/>
    <property type="evidence" value="ECO:0007669"/>
    <property type="project" value="UniProtKB-KW"/>
</dbReference>
<dbReference type="GO" id="GO:0090729">
    <property type="term" value="F:toxin activity"/>
    <property type="evidence" value="ECO:0007669"/>
    <property type="project" value="UniProtKB-KW"/>
</dbReference>
<dbReference type="InterPro" id="IPR003582">
    <property type="entry name" value="ShKT_dom"/>
</dbReference>
<dbReference type="Pfam" id="PF01549">
    <property type="entry name" value="ShK"/>
    <property type="match status" value="1"/>
</dbReference>
<dbReference type="PROSITE" id="PS51670">
    <property type="entry name" value="SHKT"/>
    <property type="match status" value="1"/>
</dbReference>
<feature type="signal peptide" evidence="2">
    <location>
        <begin position="1"/>
        <end position="20"/>
    </location>
</feature>
<feature type="propeptide" id="PRO_0000433747" evidence="7">
    <location>
        <begin position="21"/>
        <end position="42"/>
    </location>
</feature>
<feature type="chain" id="PRO_0000433748" description="U-actitoxin-Avd10a" evidence="7">
    <location>
        <begin position="45"/>
        <end position="86"/>
    </location>
</feature>
<feature type="domain" description="ShKT" evidence="3">
    <location>
        <begin position="51"/>
        <end position="86"/>
    </location>
</feature>
<feature type="disulfide bond" evidence="3">
    <location>
        <begin position="51"/>
        <end position="86"/>
    </location>
</feature>
<feature type="disulfide bond" evidence="3">
    <location>
        <begin position="60"/>
        <end position="79"/>
    </location>
</feature>
<feature type="disulfide bond" evidence="3">
    <location>
        <begin position="69"/>
        <end position="83"/>
    </location>
</feature>
<proteinExistence type="inferred from homology"/>
<comment type="function">
    <text evidence="1">Inhibits voltage-gated potassium channels (Kv1/KCNA).</text>
</comment>
<comment type="subcellular location">
    <subcellularLocation>
        <location evidence="6">Secreted</location>
    </subcellularLocation>
    <subcellularLocation>
        <location evidence="6">Nematocyst</location>
    </subcellularLocation>
</comment>
<comment type="similarity">
    <text>Belongs to the sea anemone type 1 potassium channel toxin family. Type 1b subfamily.</text>
</comment>
<comment type="caution">
    <text evidence="6">Opinions are divided on whether Anemonia viridis (Forsskal, 1775) and Anemonia sulcata (Pennant, 1777) are separate species.</text>
</comment>
<sequence>MSRIAILLFVAFLLVAGISAKSTAHFKKNVLADLFKERRFNAKRDPAGSTCVNIDVDSFCDGMAERGACNIIPQMATNCAKACNSC</sequence>
<keyword id="KW-1015">Disulfide bond</keyword>
<keyword id="KW-0872">Ion channel impairing toxin</keyword>
<keyword id="KW-0166">Nematocyst</keyword>
<keyword id="KW-0528">Neurotoxin</keyword>
<keyword id="KW-0632">Potassium channel impairing toxin</keyword>
<keyword id="KW-0964">Secreted</keyword>
<keyword id="KW-0732">Signal</keyword>
<keyword id="KW-0800">Toxin</keyword>
<keyword id="KW-1220">Voltage-gated potassium channel impairing toxin</keyword>
<organism>
    <name type="scientific">Anemonia viridis</name>
    <name type="common">Snakelocks anemone</name>
    <dbReference type="NCBI Taxonomy" id="51769"/>
    <lineage>
        <taxon>Eukaryota</taxon>
        <taxon>Metazoa</taxon>
        <taxon>Cnidaria</taxon>
        <taxon>Anthozoa</taxon>
        <taxon>Hexacorallia</taxon>
        <taxon>Actiniaria</taxon>
        <taxon>Actiniidae</taxon>
        <taxon>Anemonia</taxon>
    </lineage>
</organism>
<evidence type="ECO:0000250" key="1">
    <source>
        <dbReference type="UniProtKB" id="P29186"/>
    </source>
</evidence>
<evidence type="ECO:0000255" key="2"/>
<evidence type="ECO:0000255" key="3">
    <source>
        <dbReference type="PROSITE-ProRule" id="PRU01005"/>
    </source>
</evidence>
<evidence type="ECO:0000303" key="4">
    <source>
    </source>
</evidence>
<evidence type="ECO:0000303" key="5">
    <source>
    </source>
</evidence>
<evidence type="ECO:0000305" key="6"/>
<evidence type="ECO:0000305" key="7">
    <source>
    </source>
</evidence>